<name>YL345_YEAST</name>
<keyword id="KW-0067">ATP-binding</keyword>
<keyword id="KW-0963">Cytoplasm</keyword>
<keyword id="KW-0378">Hydrolase</keyword>
<keyword id="KW-0418">Kinase</keyword>
<keyword id="KW-0511">Multifunctional enzyme</keyword>
<keyword id="KW-0547">Nucleotide-binding</keyword>
<keyword id="KW-0597">Phosphoprotein</keyword>
<keyword id="KW-1185">Reference proteome</keyword>
<keyword id="KW-0808">Transferase</keyword>
<dbReference type="EC" id="2.7.1.105"/>
<dbReference type="EC" id="3.1.3.46"/>
<dbReference type="EMBL" id="U19028">
    <property type="protein sequence ID" value="AAB67253.1"/>
    <property type="molecule type" value="Genomic_DNA"/>
</dbReference>
<dbReference type="EMBL" id="BK006945">
    <property type="protein sequence ID" value="DAA09650.1"/>
    <property type="molecule type" value="Genomic_DNA"/>
</dbReference>
<dbReference type="PIR" id="S51348">
    <property type="entry name" value="S51348"/>
</dbReference>
<dbReference type="RefSeq" id="NP_013449.1">
    <property type="nucleotide sequence ID" value="NM_001182234.1"/>
</dbReference>
<dbReference type="SMR" id="Q06137"/>
<dbReference type="BioGRID" id="31608">
    <property type="interactions" value="96"/>
</dbReference>
<dbReference type="DIP" id="DIP-1500N"/>
<dbReference type="FunCoup" id="Q06137">
    <property type="interactions" value="215"/>
</dbReference>
<dbReference type="IntAct" id="Q06137">
    <property type="interactions" value="15"/>
</dbReference>
<dbReference type="MINT" id="Q06137"/>
<dbReference type="STRING" id="4932.YLR345W"/>
<dbReference type="iPTMnet" id="Q06137"/>
<dbReference type="PaxDb" id="4932-YLR345W"/>
<dbReference type="PeptideAtlas" id="Q06137"/>
<dbReference type="EnsemblFungi" id="YLR345W_mRNA">
    <property type="protein sequence ID" value="YLR345W"/>
    <property type="gene ID" value="YLR345W"/>
</dbReference>
<dbReference type="GeneID" id="851059"/>
<dbReference type="KEGG" id="sce:YLR345W"/>
<dbReference type="AGR" id="SGD:S000004337"/>
<dbReference type="SGD" id="S000004337">
    <property type="gene designation" value="YLR345W"/>
</dbReference>
<dbReference type="VEuPathDB" id="FungiDB:YLR345W"/>
<dbReference type="eggNOG" id="KOG0234">
    <property type="taxonomic scope" value="Eukaryota"/>
</dbReference>
<dbReference type="GeneTree" id="ENSGT00950000182835"/>
<dbReference type="HOGENOM" id="CLU_006383_0_2_1"/>
<dbReference type="InParanoid" id="Q06137"/>
<dbReference type="OMA" id="VKTHVFH"/>
<dbReference type="OrthoDB" id="267323at2759"/>
<dbReference type="BioCyc" id="YEAST:G3O-32421-MONOMER"/>
<dbReference type="Reactome" id="R-SCE-9634600">
    <property type="pathway name" value="Regulation of glycolysis by fructose 2,6-bisphosphate metabolism"/>
</dbReference>
<dbReference type="BioGRID-ORCS" id="851059">
    <property type="hits" value="2 hits in 10 CRISPR screens"/>
</dbReference>
<dbReference type="PRO" id="PR:Q06137"/>
<dbReference type="Proteomes" id="UP000002311">
    <property type="component" value="Chromosome XII"/>
</dbReference>
<dbReference type="RNAct" id="Q06137">
    <property type="molecule type" value="protein"/>
</dbReference>
<dbReference type="GO" id="GO:0005737">
    <property type="term" value="C:cytoplasm"/>
    <property type="evidence" value="ECO:0007005"/>
    <property type="project" value="SGD"/>
</dbReference>
<dbReference type="GO" id="GO:0005829">
    <property type="term" value="C:cytosol"/>
    <property type="evidence" value="ECO:0000318"/>
    <property type="project" value="GO_Central"/>
</dbReference>
<dbReference type="GO" id="GO:0003873">
    <property type="term" value="F:6-phosphofructo-2-kinase activity"/>
    <property type="evidence" value="ECO:0000318"/>
    <property type="project" value="GO_Central"/>
</dbReference>
<dbReference type="GO" id="GO:0005524">
    <property type="term" value="F:ATP binding"/>
    <property type="evidence" value="ECO:0007669"/>
    <property type="project" value="UniProtKB-KW"/>
</dbReference>
<dbReference type="GO" id="GO:0004331">
    <property type="term" value="F:fructose-2,6-bisphosphate 2-phosphatase activity"/>
    <property type="evidence" value="ECO:0000318"/>
    <property type="project" value="GO_Central"/>
</dbReference>
<dbReference type="GO" id="GO:0006003">
    <property type="term" value="P:fructose 2,6-bisphosphate metabolic process"/>
    <property type="evidence" value="ECO:0000318"/>
    <property type="project" value="GO_Central"/>
</dbReference>
<dbReference type="GO" id="GO:0006000">
    <property type="term" value="P:fructose metabolic process"/>
    <property type="evidence" value="ECO:0007669"/>
    <property type="project" value="InterPro"/>
</dbReference>
<dbReference type="GO" id="GO:0006110">
    <property type="term" value="P:regulation of glycolytic process"/>
    <property type="evidence" value="ECO:0000303"/>
    <property type="project" value="SGD"/>
</dbReference>
<dbReference type="CDD" id="cd07067">
    <property type="entry name" value="HP_PGM_like"/>
    <property type="match status" value="1"/>
</dbReference>
<dbReference type="FunFam" id="3.40.50.1240:FF:000031">
    <property type="entry name" value="6-phosphofructo-2-kinase/fructose-2, 6-bisphosphatase"/>
    <property type="match status" value="1"/>
</dbReference>
<dbReference type="FunFam" id="3.40.50.300:FF:002375">
    <property type="entry name" value="Conserved protein"/>
    <property type="match status" value="1"/>
</dbReference>
<dbReference type="Gene3D" id="3.40.50.300">
    <property type="entry name" value="P-loop containing nucleotide triphosphate hydrolases"/>
    <property type="match status" value="1"/>
</dbReference>
<dbReference type="Gene3D" id="3.40.50.1240">
    <property type="entry name" value="Phosphoglycerate mutase-like"/>
    <property type="match status" value="1"/>
</dbReference>
<dbReference type="InterPro" id="IPR003094">
    <property type="entry name" value="6Pfruct_kin"/>
</dbReference>
<dbReference type="InterPro" id="IPR013079">
    <property type="entry name" value="6Phosfructo_kin"/>
</dbReference>
<dbReference type="InterPro" id="IPR013078">
    <property type="entry name" value="His_Pase_superF_clade-1"/>
</dbReference>
<dbReference type="InterPro" id="IPR029033">
    <property type="entry name" value="His_PPase_superfam"/>
</dbReference>
<dbReference type="InterPro" id="IPR027417">
    <property type="entry name" value="P-loop_NTPase"/>
</dbReference>
<dbReference type="PANTHER" id="PTHR10606">
    <property type="entry name" value="6-PHOSPHOFRUCTO-2-KINASE/FRUCTOSE-2,6-BISPHOSPHATASE"/>
    <property type="match status" value="1"/>
</dbReference>
<dbReference type="PANTHER" id="PTHR10606:SF39">
    <property type="entry name" value="6-PHOSPHOFRUCTO-2-KINASE_FRUCTOSE-2,6-BISPHOSPHATASE YLR345W-RELATED"/>
    <property type="match status" value="1"/>
</dbReference>
<dbReference type="Pfam" id="PF01591">
    <property type="entry name" value="6PF2K"/>
    <property type="match status" value="1"/>
</dbReference>
<dbReference type="Pfam" id="PF00300">
    <property type="entry name" value="His_Phos_1"/>
    <property type="match status" value="1"/>
</dbReference>
<dbReference type="PIRSF" id="PIRSF000709">
    <property type="entry name" value="6PFK_2-Ptase"/>
    <property type="match status" value="1"/>
</dbReference>
<dbReference type="PRINTS" id="PR00991">
    <property type="entry name" value="6PFRUCTKNASE"/>
</dbReference>
<dbReference type="SMART" id="SM00855">
    <property type="entry name" value="PGAM"/>
    <property type="match status" value="1"/>
</dbReference>
<dbReference type="SUPFAM" id="SSF52540">
    <property type="entry name" value="P-loop containing nucleoside triphosphate hydrolases"/>
    <property type="match status" value="1"/>
</dbReference>
<dbReference type="SUPFAM" id="SSF53254">
    <property type="entry name" value="Phosphoglycerate mutase-like"/>
    <property type="match status" value="1"/>
</dbReference>
<evidence type="ECO:0000250" key="1"/>
<evidence type="ECO:0000250" key="2">
    <source>
        <dbReference type="UniProtKB" id="P07953"/>
    </source>
</evidence>
<evidence type="ECO:0000250" key="3">
    <source>
        <dbReference type="UniProtKB" id="Q16875"/>
    </source>
</evidence>
<evidence type="ECO:0000269" key="4">
    <source>
    </source>
</evidence>
<evidence type="ECO:0000269" key="5">
    <source>
    </source>
</evidence>
<evidence type="ECO:0000269" key="6">
    <source>
    </source>
</evidence>
<evidence type="ECO:0000305" key="7"/>
<evidence type="ECO:0007744" key="8">
    <source>
    </source>
</evidence>
<organism>
    <name type="scientific">Saccharomyces cerevisiae (strain ATCC 204508 / S288c)</name>
    <name type="common">Baker's yeast</name>
    <dbReference type="NCBI Taxonomy" id="559292"/>
    <lineage>
        <taxon>Eukaryota</taxon>
        <taxon>Fungi</taxon>
        <taxon>Dikarya</taxon>
        <taxon>Ascomycota</taxon>
        <taxon>Saccharomycotina</taxon>
        <taxon>Saccharomycetes</taxon>
        <taxon>Saccharomycetales</taxon>
        <taxon>Saccharomycetaceae</taxon>
        <taxon>Saccharomyces</taxon>
    </lineage>
</organism>
<accession>Q06137</accession>
<accession>D6VYY4</accession>
<gene>
    <name type="ordered locus">YLR345W</name>
</gene>
<comment type="function">
    <text evidence="1">Synthesis and degradation of fructose 2,6-bisphosphate.</text>
</comment>
<comment type="catalytic activity">
    <reaction>
        <text>beta-D-fructose 2,6-bisphosphate + H2O = beta-D-fructose 6-phosphate + phosphate</text>
        <dbReference type="Rhea" id="RHEA:17289"/>
        <dbReference type="ChEBI" id="CHEBI:15377"/>
        <dbReference type="ChEBI" id="CHEBI:43474"/>
        <dbReference type="ChEBI" id="CHEBI:57634"/>
        <dbReference type="ChEBI" id="CHEBI:58579"/>
        <dbReference type="EC" id="3.1.3.46"/>
    </reaction>
</comment>
<comment type="catalytic activity">
    <reaction>
        <text>beta-D-fructose 6-phosphate + ATP = beta-D-fructose 2,6-bisphosphate + ADP + H(+)</text>
        <dbReference type="Rhea" id="RHEA:15653"/>
        <dbReference type="ChEBI" id="CHEBI:15378"/>
        <dbReference type="ChEBI" id="CHEBI:30616"/>
        <dbReference type="ChEBI" id="CHEBI:57634"/>
        <dbReference type="ChEBI" id="CHEBI:58579"/>
        <dbReference type="ChEBI" id="CHEBI:456216"/>
        <dbReference type="EC" id="2.7.1.105"/>
    </reaction>
</comment>
<comment type="subunit">
    <text evidence="1">Homodimer.</text>
</comment>
<comment type="interaction">
    <interactant intactId="EBI-33827">
        <id>Q06137</id>
    </interactant>
    <interactant intactId="EBI-6749">
        <id>P32604</id>
        <label>FBP26</label>
    </interactant>
    <organismsDiffer>false</organismsDiffer>
    <experiments>4</experiments>
</comment>
<comment type="interaction">
    <interactant intactId="EBI-33827">
        <id>Q06137</id>
    </interactant>
    <interactant intactId="EBI-20640">
        <id>P28004</id>
        <label>PRP45</label>
    </interactant>
    <organismsDiffer>false</organismsDiffer>
    <experiments>3</experiments>
</comment>
<comment type="subcellular location">
    <subcellularLocation>
        <location evidence="4">Cytoplasm</location>
    </subcellularLocation>
</comment>
<comment type="induction">
    <text evidence="6">Expression is under the control of the RFX1 transcription factor.</text>
</comment>
<comment type="miscellaneous">
    <text evidence="5">Present with 3380 molecules/cell in log phase SD medium.</text>
</comment>
<comment type="similarity">
    <text evidence="7">In the C-terminal section; belongs to the phosphoglycerate mutase family.</text>
</comment>
<protein>
    <recommendedName>
        <fullName>Putative 6-phosphofructo-2-kinase/fructose-2,6-bisphosphatase YLR345W</fullName>
    </recommendedName>
    <domain>
        <recommendedName>
            <fullName>6-phosphofructo-2-kinase</fullName>
            <ecNumber>2.7.1.105</ecNumber>
        </recommendedName>
    </domain>
    <domain>
        <recommendedName>
            <fullName>Fructose-2,6-bisphosphatase</fullName>
            <ecNumber>3.1.3.46</ecNumber>
        </recommendedName>
    </domain>
</protein>
<sequence length="509" mass="58386">MPNVLSDDEELLNGLGSEIMKPSRQGNHMARTVKRWVNKERATTADLKNVNIDGVHGPVNTESYISPGQLYSTDSGNLFHAGRILVVLVGLPATSKTLLSVAITRYTRWLGVRTKSFHFSEYKESAKNIPSDYFCVVPTSKEGVAFVEKLRMQMLNDILAFFNDLSGQLAIYDALNIRKIDRKNLETTFSEIGVKVLFIESIVSDQEIMNRNIALALESNDYKGLSTDEAIDEYMRRLSVNEPYYEMMTHDEELSYIKYINLGKQIIVKDNIHGYLVNKIVFFLMNLRQKKGCVYFARCGTSDKDNYIHDEELNEEGIHYSQVLKDFVLQRIKQKRQAKKNSDSLVEVIDGSHDEDLKTSLIVWTGPRKRTHDTALFFSKEGIKVQQRSELRQLNPGSIADLTDQQIMDKFPSEYKESLKDPYHFRFPRAESYHDLAVRMEPLLLEMEHTSKDILIIAHESTLRVLYGYLMACTCVELPNLNFTRDKLVEISFSPFCNTVELLNIPLTS</sequence>
<reference key="1">
    <citation type="journal article" date="1997" name="Nature">
        <title>The nucleotide sequence of Saccharomyces cerevisiae chromosome XII.</title>
        <authorList>
            <person name="Johnston M."/>
            <person name="Hillier L.W."/>
            <person name="Riles L."/>
            <person name="Albermann K."/>
            <person name="Andre B."/>
            <person name="Ansorge W."/>
            <person name="Benes V."/>
            <person name="Brueckner M."/>
            <person name="Delius H."/>
            <person name="Dubois E."/>
            <person name="Duesterhoeft A."/>
            <person name="Entian K.-D."/>
            <person name="Floeth M."/>
            <person name="Goffeau A."/>
            <person name="Hebling U."/>
            <person name="Heumann K."/>
            <person name="Heuss-Neitzel D."/>
            <person name="Hilbert H."/>
            <person name="Hilger F."/>
            <person name="Kleine K."/>
            <person name="Koetter P."/>
            <person name="Louis E.J."/>
            <person name="Messenguy F."/>
            <person name="Mewes H.-W."/>
            <person name="Miosga T."/>
            <person name="Moestl D."/>
            <person name="Mueller-Auer S."/>
            <person name="Nentwich U."/>
            <person name="Obermaier B."/>
            <person name="Piravandi E."/>
            <person name="Pohl T.M."/>
            <person name="Portetelle D."/>
            <person name="Purnelle B."/>
            <person name="Rechmann S."/>
            <person name="Rieger M."/>
            <person name="Rinke M."/>
            <person name="Rose M."/>
            <person name="Scharfe M."/>
            <person name="Scherens B."/>
            <person name="Scholler P."/>
            <person name="Schwager C."/>
            <person name="Schwarz S."/>
            <person name="Underwood A.P."/>
            <person name="Urrestarazu L.A."/>
            <person name="Vandenbol M."/>
            <person name="Verhasselt P."/>
            <person name="Vierendeels F."/>
            <person name="Voet M."/>
            <person name="Volckaert G."/>
            <person name="Voss H."/>
            <person name="Wambutt R."/>
            <person name="Wedler E."/>
            <person name="Wedler H."/>
            <person name="Zimmermann F.K."/>
            <person name="Zollner A."/>
            <person name="Hani J."/>
            <person name="Hoheisel J.D."/>
        </authorList>
    </citation>
    <scope>NUCLEOTIDE SEQUENCE [LARGE SCALE GENOMIC DNA]</scope>
    <source>
        <strain>ATCC 204508 / S288c</strain>
    </source>
</reference>
<reference key="2">
    <citation type="journal article" date="2014" name="G3 (Bethesda)">
        <title>The reference genome sequence of Saccharomyces cerevisiae: Then and now.</title>
        <authorList>
            <person name="Engel S.R."/>
            <person name="Dietrich F.S."/>
            <person name="Fisk D.G."/>
            <person name="Binkley G."/>
            <person name="Balakrishnan R."/>
            <person name="Costanzo M.C."/>
            <person name="Dwight S.S."/>
            <person name="Hitz B.C."/>
            <person name="Karra K."/>
            <person name="Nash R.S."/>
            <person name="Weng S."/>
            <person name="Wong E.D."/>
            <person name="Lloyd P."/>
            <person name="Skrzypek M.S."/>
            <person name="Miyasato S.R."/>
            <person name="Simison M."/>
            <person name="Cherry J.M."/>
        </authorList>
    </citation>
    <scope>GENOME REANNOTATION</scope>
    <source>
        <strain>ATCC 204508 / S288c</strain>
    </source>
</reference>
<reference key="3">
    <citation type="journal article" date="2003" name="Nature">
        <title>Global analysis of protein localization in budding yeast.</title>
        <authorList>
            <person name="Huh W.-K."/>
            <person name="Falvo J.V."/>
            <person name="Gerke L.C."/>
            <person name="Carroll A.S."/>
            <person name="Howson R.W."/>
            <person name="Weissman J.S."/>
            <person name="O'Shea E.K."/>
        </authorList>
    </citation>
    <scope>SUBCELLULAR LOCATION [LARGE SCALE ANALYSIS]</scope>
</reference>
<reference key="4">
    <citation type="journal article" date="2003" name="Nature">
        <title>Global analysis of protein expression in yeast.</title>
        <authorList>
            <person name="Ghaemmaghami S."/>
            <person name="Huh W.-K."/>
            <person name="Bower K."/>
            <person name="Howson R.W."/>
            <person name="Belle A."/>
            <person name="Dephoure N."/>
            <person name="O'Shea E.K."/>
            <person name="Weissman J.S."/>
        </authorList>
    </citation>
    <scope>LEVEL OF PROTEIN EXPRESSION [LARGE SCALE ANALYSIS]</scope>
</reference>
<reference key="5">
    <citation type="journal article" date="2005" name="J. Biol. Chem.">
        <title>Identification of new genes regulated by the Crt1 transcription factor, an effector of the DNA damage checkpoint pathway in Saccharomyces cerevisiae.</title>
        <authorList>
            <person name="Zaim J."/>
            <person name="Speina E."/>
            <person name="Kierzek A.M."/>
        </authorList>
    </citation>
    <scope>INDUCTION</scope>
</reference>
<reference key="6">
    <citation type="journal article" date="2008" name="Mol. Cell. Proteomics">
        <title>A multidimensional chromatography technology for in-depth phosphoproteome analysis.</title>
        <authorList>
            <person name="Albuquerque C.P."/>
            <person name="Smolka M.B."/>
            <person name="Payne S.H."/>
            <person name="Bafna V."/>
            <person name="Eng J."/>
            <person name="Zhou H."/>
        </authorList>
    </citation>
    <scope>PHOSPHORYLATION [LARGE SCALE ANALYSIS] AT SER-6</scope>
    <scope>IDENTIFICATION BY MASS SPECTROMETRY [LARGE SCALE ANALYSIS]</scope>
</reference>
<reference key="7">
    <citation type="journal article" date="2012" name="Proc. Natl. Acad. Sci. U.S.A.">
        <title>N-terminal acetylome analyses and functional insights of the N-terminal acetyltransferase NatB.</title>
        <authorList>
            <person name="Van Damme P."/>
            <person name="Lasa M."/>
            <person name="Polevoda B."/>
            <person name="Gazquez C."/>
            <person name="Elosegui-Artola A."/>
            <person name="Kim D.S."/>
            <person name="De Juan-Pardo E."/>
            <person name="Demeyer K."/>
            <person name="Hole K."/>
            <person name="Larrea E."/>
            <person name="Timmerman E."/>
            <person name="Prieto J."/>
            <person name="Arnesen T."/>
            <person name="Sherman F."/>
            <person name="Gevaert K."/>
            <person name="Aldabe R."/>
        </authorList>
    </citation>
    <scope>IDENTIFICATION BY MASS SPECTROMETRY [LARGE SCALE ANALYSIS]</scope>
</reference>
<proteinExistence type="evidence at protein level"/>
<feature type="chain" id="PRO_0000268185" description="Putative 6-phosphofructo-2-kinase/fructose-2,6-bisphosphatase YLR345W">
    <location>
        <begin position="1"/>
        <end position="509"/>
    </location>
</feature>
<feature type="region of interest" description="6-phosphofructo-2-kinase" evidence="1">
    <location>
        <begin position="6"/>
        <end position="291"/>
    </location>
</feature>
<feature type="region of interest" description="Fructose-2,6-bisphosphatase" evidence="1">
    <location>
        <begin position="292"/>
        <end position="466"/>
    </location>
</feature>
<feature type="active site" description="Proton donor/acceptor" evidence="3">
    <location>
        <position position="173"/>
    </location>
</feature>
<feature type="binding site" evidence="3">
    <location>
        <begin position="90"/>
        <end position="98"/>
    </location>
    <ligand>
        <name>ATP</name>
        <dbReference type="ChEBI" id="CHEBI:30616"/>
    </ligand>
</feature>
<feature type="binding site" evidence="3">
    <location>
        <begin position="212"/>
        <end position="217"/>
    </location>
    <ligand>
        <name>ATP</name>
        <dbReference type="ChEBI" id="CHEBI:30616"/>
    </ligand>
</feature>
<feature type="binding site" evidence="3">
    <location>
        <position position="237"/>
    </location>
    <ligand>
        <name>beta-D-fructose 6-phosphate</name>
        <dbReference type="ChEBI" id="CHEBI:57634"/>
    </ligand>
</feature>
<feature type="binding site" evidence="3">
    <location>
        <position position="298"/>
    </location>
    <ligand>
        <name>beta-D-fructose 2,6-bisphosphate</name>
        <dbReference type="ChEBI" id="CHEBI:58579"/>
    </ligand>
</feature>
<feature type="binding site" evidence="2">
    <location>
        <begin position="415"/>
        <end position="418"/>
    </location>
    <ligand>
        <name>ATP</name>
        <dbReference type="ChEBI" id="CHEBI:30616"/>
    </ligand>
</feature>
<feature type="binding site" evidence="3">
    <location>
        <position position="433"/>
    </location>
    <ligand>
        <name>beta-D-fructose 2,6-bisphosphate</name>
        <dbReference type="ChEBI" id="CHEBI:58579"/>
    </ligand>
</feature>
<feature type="binding site" evidence="2">
    <location>
        <begin position="460"/>
        <end position="464"/>
    </location>
    <ligand>
        <name>ATP</name>
        <dbReference type="ChEBI" id="CHEBI:30616"/>
    </ligand>
</feature>
<feature type="binding site" evidence="2">
    <location>
        <position position="464"/>
    </location>
    <ligand>
        <name>beta-D-fructose 2,6-bisphosphate</name>
        <dbReference type="ChEBI" id="CHEBI:58579"/>
    </ligand>
</feature>
<feature type="site" description="Transition state stabilizer" evidence="3">
    <location>
        <position position="298"/>
    </location>
</feature>
<feature type="site" description="Transition state stabilizer" evidence="3">
    <location>
        <position position="459"/>
    </location>
</feature>
<feature type="modified residue" description="Phosphoserine" evidence="8">
    <location>
        <position position="6"/>
    </location>
</feature>